<proteinExistence type="inferred from homology"/>
<keyword id="KW-0046">Antibiotic resistance</keyword>
<keyword id="KW-0997">Cell inner membrane</keyword>
<keyword id="KW-1003">Cell membrane</keyword>
<keyword id="KW-0472">Membrane</keyword>
<keyword id="KW-0812">Transmembrane</keyword>
<keyword id="KW-1133">Transmembrane helix</keyword>
<keyword id="KW-0813">Transport</keyword>
<feature type="chain" id="PRO_1000200786" description="Multidrug resistance protein MdtG">
    <location>
        <begin position="1"/>
        <end position="408"/>
    </location>
</feature>
<feature type="transmembrane region" description="Helical" evidence="1">
    <location>
        <begin position="16"/>
        <end position="36"/>
    </location>
</feature>
<feature type="transmembrane region" description="Helical" evidence="1">
    <location>
        <begin position="58"/>
        <end position="78"/>
    </location>
</feature>
<feature type="transmembrane region" description="Helical" evidence="1">
    <location>
        <begin position="92"/>
        <end position="112"/>
    </location>
</feature>
<feature type="transmembrane region" description="Helical" evidence="1">
    <location>
        <begin position="115"/>
        <end position="135"/>
    </location>
</feature>
<feature type="transmembrane region" description="Helical" evidence="1">
    <location>
        <begin position="146"/>
        <end position="166"/>
    </location>
</feature>
<feature type="transmembrane region" description="Helical" evidence="1">
    <location>
        <begin position="173"/>
        <end position="193"/>
    </location>
</feature>
<feature type="transmembrane region" description="Helical" evidence="1">
    <location>
        <begin position="224"/>
        <end position="244"/>
    </location>
</feature>
<feature type="transmembrane region" description="Helical" evidence="1">
    <location>
        <begin position="253"/>
        <end position="273"/>
    </location>
</feature>
<feature type="transmembrane region" description="Helical" evidence="1">
    <location>
        <begin position="290"/>
        <end position="310"/>
    </location>
</feature>
<feature type="transmembrane region" description="Helical" evidence="1">
    <location>
        <begin position="319"/>
        <end position="339"/>
    </location>
</feature>
<feature type="transmembrane region" description="Helical" evidence="1">
    <location>
        <begin position="378"/>
        <end position="398"/>
    </location>
</feature>
<organism>
    <name type="scientific">Escherichia fergusonii (strain ATCC 35469 / DSM 13698 / CCUG 18766 / IAM 14443 / JCM 21226 / LMG 7866 / NBRC 102419 / NCTC 12128 / CDC 0568-73)</name>
    <dbReference type="NCBI Taxonomy" id="585054"/>
    <lineage>
        <taxon>Bacteria</taxon>
        <taxon>Pseudomonadati</taxon>
        <taxon>Pseudomonadota</taxon>
        <taxon>Gammaproteobacteria</taxon>
        <taxon>Enterobacterales</taxon>
        <taxon>Enterobacteriaceae</taxon>
        <taxon>Escherichia</taxon>
    </lineage>
</organism>
<accession>B7LT82</accession>
<sequence>MSPSESDDAINWKRNLIVAWLGCFLTGAAFSLVMPFLPLYVEELGVTGHSALNLWSGIVFSITFLFSAIASPFWGGLADRKGRKIMLLRSALGMGIVMILMGMAQNIWQFLILRALLGLLGGFVPNANALIATQVPRNKSGWALGTLSTGGVSGALLGPLAGGLLADHYGLRPVFFITASVLMLCFVVTLLCIKEKFQPVSKKEMLHVREVVFSLKNPRLVLSLFVTTMIIQIASGSIAPILTLYVRELAGNVGNIAFISGMIASVPGVAALLSAPRLGKLGDRIGPDKILIAALIFSVLLLIPMSFVQTPWQLGILRFLLGAADGALLPAVQTLLVYNSSNQIAGRIFSYNQSFRDIGNVTGPLMGAAISANYGFRAVFLVTACVVLFNIIYSWNSLRRRREPQVLG</sequence>
<name>MDTG_ESCF3</name>
<reference key="1">
    <citation type="journal article" date="2009" name="PLoS Genet.">
        <title>Organised genome dynamics in the Escherichia coli species results in highly diverse adaptive paths.</title>
        <authorList>
            <person name="Touchon M."/>
            <person name="Hoede C."/>
            <person name="Tenaillon O."/>
            <person name="Barbe V."/>
            <person name="Baeriswyl S."/>
            <person name="Bidet P."/>
            <person name="Bingen E."/>
            <person name="Bonacorsi S."/>
            <person name="Bouchier C."/>
            <person name="Bouvet O."/>
            <person name="Calteau A."/>
            <person name="Chiapello H."/>
            <person name="Clermont O."/>
            <person name="Cruveiller S."/>
            <person name="Danchin A."/>
            <person name="Diard M."/>
            <person name="Dossat C."/>
            <person name="Karoui M.E."/>
            <person name="Frapy E."/>
            <person name="Garry L."/>
            <person name="Ghigo J.M."/>
            <person name="Gilles A.M."/>
            <person name="Johnson J."/>
            <person name="Le Bouguenec C."/>
            <person name="Lescat M."/>
            <person name="Mangenot S."/>
            <person name="Martinez-Jehanne V."/>
            <person name="Matic I."/>
            <person name="Nassif X."/>
            <person name="Oztas S."/>
            <person name="Petit M.A."/>
            <person name="Pichon C."/>
            <person name="Rouy Z."/>
            <person name="Ruf C.S."/>
            <person name="Schneider D."/>
            <person name="Tourret J."/>
            <person name="Vacherie B."/>
            <person name="Vallenet D."/>
            <person name="Medigue C."/>
            <person name="Rocha E.P.C."/>
            <person name="Denamur E."/>
        </authorList>
    </citation>
    <scope>NUCLEOTIDE SEQUENCE [LARGE SCALE GENOMIC DNA]</scope>
    <source>
        <strain>ATCC 35469 / DSM 13698 / BCRC 15582 / CCUG 18766 / IAM 14443 / JCM 21226 / LMG 7866 / NBRC 102419 / NCTC 12128 / CDC 0568-73</strain>
    </source>
</reference>
<dbReference type="EMBL" id="CU928158">
    <property type="protein sequence ID" value="CAQ89386.1"/>
    <property type="molecule type" value="Genomic_DNA"/>
</dbReference>
<dbReference type="RefSeq" id="WP_000075067.1">
    <property type="nucleotide sequence ID" value="NC_011740.1"/>
</dbReference>
<dbReference type="SMR" id="B7LT82"/>
<dbReference type="GeneID" id="75057091"/>
<dbReference type="KEGG" id="efe:EFER_1875"/>
<dbReference type="HOGENOM" id="CLU_001265_57_3_6"/>
<dbReference type="OrthoDB" id="65739at2"/>
<dbReference type="Proteomes" id="UP000000745">
    <property type="component" value="Chromosome"/>
</dbReference>
<dbReference type="GO" id="GO:0005886">
    <property type="term" value="C:plasma membrane"/>
    <property type="evidence" value="ECO:0007669"/>
    <property type="project" value="UniProtKB-SubCell"/>
</dbReference>
<dbReference type="GO" id="GO:0022857">
    <property type="term" value="F:transmembrane transporter activity"/>
    <property type="evidence" value="ECO:0007669"/>
    <property type="project" value="UniProtKB-UniRule"/>
</dbReference>
<dbReference type="GO" id="GO:0046677">
    <property type="term" value="P:response to antibiotic"/>
    <property type="evidence" value="ECO:0007669"/>
    <property type="project" value="UniProtKB-KW"/>
</dbReference>
<dbReference type="CDD" id="cd17391">
    <property type="entry name" value="MFS_MdtG_MDR_like"/>
    <property type="match status" value="1"/>
</dbReference>
<dbReference type="FunFam" id="1.20.1250.20:FF:000020">
    <property type="entry name" value="Multidrug resistance protein MdtG"/>
    <property type="match status" value="1"/>
</dbReference>
<dbReference type="FunFam" id="1.20.1250.20:FF:000022">
    <property type="entry name" value="Multidrug resistance protein MdtG"/>
    <property type="match status" value="1"/>
</dbReference>
<dbReference type="Gene3D" id="1.20.1250.20">
    <property type="entry name" value="MFS general substrate transporter like domains"/>
    <property type="match status" value="2"/>
</dbReference>
<dbReference type="HAMAP" id="MF_01528">
    <property type="entry name" value="MFS_MdtG"/>
    <property type="match status" value="1"/>
</dbReference>
<dbReference type="InterPro" id="IPR011701">
    <property type="entry name" value="MFS"/>
</dbReference>
<dbReference type="InterPro" id="IPR020846">
    <property type="entry name" value="MFS_dom"/>
</dbReference>
<dbReference type="InterPro" id="IPR050497">
    <property type="entry name" value="MFS_MdtG_subfamily"/>
</dbReference>
<dbReference type="InterPro" id="IPR005828">
    <property type="entry name" value="MFS_sugar_transport-like"/>
</dbReference>
<dbReference type="InterPro" id="IPR036259">
    <property type="entry name" value="MFS_trans_sf"/>
</dbReference>
<dbReference type="InterPro" id="IPR023692">
    <property type="entry name" value="Mutidrug-R_MdtG"/>
</dbReference>
<dbReference type="InterPro" id="IPR001958">
    <property type="entry name" value="Tet-R_TetA/multi-R_MdtG-like"/>
</dbReference>
<dbReference type="NCBIfam" id="NF007372">
    <property type="entry name" value="PRK09874.1"/>
    <property type="match status" value="1"/>
</dbReference>
<dbReference type="PANTHER" id="PTHR43414">
    <property type="entry name" value="MULTIDRUG RESISTANCE PROTEIN MDTG"/>
    <property type="match status" value="1"/>
</dbReference>
<dbReference type="PANTHER" id="PTHR43414:SF6">
    <property type="entry name" value="MULTIDRUG RESISTANCE PROTEIN MDTG"/>
    <property type="match status" value="1"/>
</dbReference>
<dbReference type="Pfam" id="PF07690">
    <property type="entry name" value="MFS_1"/>
    <property type="match status" value="1"/>
</dbReference>
<dbReference type="Pfam" id="PF00083">
    <property type="entry name" value="Sugar_tr"/>
    <property type="match status" value="1"/>
</dbReference>
<dbReference type="PRINTS" id="PR01035">
    <property type="entry name" value="TCRTETA"/>
</dbReference>
<dbReference type="SUPFAM" id="SSF103473">
    <property type="entry name" value="MFS general substrate transporter"/>
    <property type="match status" value="1"/>
</dbReference>
<dbReference type="PROSITE" id="PS50850">
    <property type="entry name" value="MFS"/>
    <property type="match status" value="1"/>
</dbReference>
<comment type="function">
    <text evidence="1">Confers resistance to fosfomycin and deoxycholate.</text>
</comment>
<comment type="subcellular location">
    <subcellularLocation>
        <location evidence="1">Cell inner membrane</location>
        <topology evidence="1">Multi-pass membrane protein</topology>
    </subcellularLocation>
</comment>
<comment type="similarity">
    <text evidence="1">Belongs to the major facilitator superfamily. DHA1 family. MdtG (TC 2.A.1.2.20) subfamily.</text>
</comment>
<protein>
    <recommendedName>
        <fullName evidence="1">Multidrug resistance protein MdtG</fullName>
    </recommendedName>
</protein>
<evidence type="ECO:0000255" key="1">
    <source>
        <dbReference type="HAMAP-Rule" id="MF_01528"/>
    </source>
</evidence>
<gene>
    <name evidence="1" type="primary">mdtG</name>
    <name type="ordered locus">EFER_1875</name>
</gene>